<dbReference type="EMBL" id="AE014074">
    <property type="protein sequence ID" value="AAM79123.1"/>
    <property type="molecule type" value="Genomic_DNA"/>
</dbReference>
<dbReference type="RefSeq" id="WP_000048058.1">
    <property type="nucleotide sequence ID" value="NC_004070.1"/>
</dbReference>
<dbReference type="SMR" id="P0DE86"/>
<dbReference type="GeneID" id="93936799"/>
<dbReference type="KEGG" id="spg:SpyM3_0516"/>
<dbReference type="HOGENOM" id="CLU_159258_3_2_9"/>
<dbReference type="Proteomes" id="UP000000564">
    <property type="component" value="Chromosome"/>
</dbReference>
<dbReference type="GO" id="GO:1990904">
    <property type="term" value="C:ribonucleoprotein complex"/>
    <property type="evidence" value="ECO:0007669"/>
    <property type="project" value="UniProtKB-KW"/>
</dbReference>
<dbReference type="GO" id="GO:0005840">
    <property type="term" value="C:ribosome"/>
    <property type="evidence" value="ECO:0007669"/>
    <property type="project" value="UniProtKB-KW"/>
</dbReference>
<dbReference type="GO" id="GO:0003735">
    <property type="term" value="F:structural constituent of ribosome"/>
    <property type="evidence" value="ECO:0007669"/>
    <property type="project" value="InterPro"/>
</dbReference>
<dbReference type="GO" id="GO:0006412">
    <property type="term" value="P:translation"/>
    <property type="evidence" value="ECO:0007669"/>
    <property type="project" value="UniProtKB-UniRule"/>
</dbReference>
<dbReference type="Gene3D" id="1.20.5.1150">
    <property type="entry name" value="Ribosomal protein S8"/>
    <property type="match status" value="1"/>
</dbReference>
<dbReference type="HAMAP" id="MF_00358">
    <property type="entry name" value="Ribosomal_bS21"/>
    <property type="match status" value="1"/>
</dbReference>
<dbReference type="InterPro" id="IPR001911">
    <property type="entry name" value="Ribosomal_bS21"/>
</dbReference>
<dbReference type="InterPro" id="IPR018278">
    <property type="entry name" value="Ribosomal_bS21_CS"/>
</dbReference>
<dbReference type="InterPro" id="IPR038380">
    <property type="entry name" value="Ribosomal_bS21_sf"/>
</dbReference>
<dbReference type="NCBIfam" id="TIGR00030">
    <property type="entry name" value="S21p"/>
    <property type="match status" value="1"/>
</dbReference>
<dbReference type="PANTHER" id="PTHR21109">
    <property type="entry name" value="MITOCHONDRIAL 28S RIBOSOMAL PROTEIN S21"/>
    <property type="match status" value="1"/>
</dbReference>
<dbReference type="PANTHER" id="PTHR21109:SF22">
    <property type="entry name" value="SMALL RIBOSOMAL SUBUNIT PROTEIN BS21"/>
    <property type="match status" value="1"/>
</dbReference>
<dbReference type="Pfam" id="PF01165">
    <property type="entry name" value="Ribosomal_S21"/>
    <property type="match status" value="1"/>
</dbReference>
<dbReference type="PRINTS" id="PR00976">
    <property type="entry name" value="RIBOSOMALS21"/>
</dbReference>
<dbReference type="PROSITE" id="PS01181">
    <property type="entry name" value="RIBOSOMAL_S21"/>
    <property type="match status" value="1"/>
</dbReference>
<accession>P0DE86</accession>
<accession>P66527</accession>
<accession>Q9A0H1</accession>
<name>RS21_STRP3</name>
<feature type="chain" id="PRO_0000178384" description="Small ribosomal subunit protein bS21">
    <location>
        <begin position="1"/>
        <end position="58"/>
    </location>
</feature>
<feature type="region of interest" description="Disordered" evidence="2">
    <location>
        <begin position="36"/>
        <end position="58"/>
    </location>
</feature>
<feature type="compositionally biased region" description="Basic residues" evidence="2">
    <location>
        <begin position="43"/>
        <end position="58"/>
    </location>
</feature>
<reference key="1">
    <citation type="journal article" date="2002" name="Proc. Natl. Acad. Sci. U.S.A.">
        <title>Genome sequence of a serotype M3 strain of group A Streptococcus: phage-encoded toxins, the high-virulence phenotype, and clone emergence.</title>
        <authorList>
            <person name="Beres S.B."/>
            <person name="Sylva G.L."/>
            <person name="Barbian K.D."/>
            <person name="Lei B."/>
            <person name="Hoff J.S."/>
            <person name="Mammarella N.D."/>
            <person name="Liu M.-Y."/>
            <person name="Smoot J.C."/>
            <person name="Porcella S.F."/>
            <person name="Parkins L.D."/>
            <person name="Campbell D.S."/>
            <person name="Smith T.M."/>
            <person name="McCormick J.K."/>
            <person name="Leung D.Y.M."/>
            <person name="Schlievert P.M."/>
            <person name="Musser J.M."/>
        </authorList>
    </citation>
    <scope>NUCLEOTIDE SEQUENCE [LARGE SCALE GENOMIC DNA]</scope>
    <source>
        <strain>ATCC BAA-595 / MGAS315</strain>
    </source>
</reference>
<proteinExistence type="inferred from homology"/>
<keyword id="KW-0687">Ribonucleoprotein</keyword>
<keyword id="KW-0689">Ribosomal protein</keyword>
<protein>
    <recommendedName>
        <fullName evidence="1">Small ribosomal subunit protein bS21</fullName>
    </recommendedName>
    <alternativeName>
        <fullName evidence="3">30S ribosomal protein S21</fullName>
    </alternativeName>
</protein>
<sequence length="58" mass="6972">MSKTVVRKNESLDDALRRFKRSVTKAGTLQESRKREFYEKPSVKRKRKSEAARKRKKF</sequence>
<comment type="similarity">
    <text evidence="1">Belongs to the bacterial ribosomal protein bS21 family.</text>
</comment>
<gene>
    <name evidence="1" type="primary">rpsU</name>
    <name type="ordered locus">SpyM3_0516</name>
</gene>
<organism>
    <name type="scientific">Streptococcus pyogenes serotype M3 (strain ATCC BAA-595 / MGAS315)</name>
    <dbReference type="NCBI Taxonomy" id="198466"/>
    <lineage>
        <taxon>Bacteria</taxon>
        <taxon>Bacillati</taxon>
        <taxon>Bacillota</taxon>
        <taxon>Bacilli</taxon>
        <taxon>Lactobacillales</taxon>
        <taxon>Streptococcaceae</taxon>
        <taxon>Streptococcus</taxon>
    </lineage>
</organism>
<evidence type="ECO:0000255" key="1">
    <source>
        <dbReference type="HAMAP-Rule" id="MF_00358"/>
    </source>
</evidence>
<evidence type="ECO:0000256" key="2">
    <source>
        <dbReference type="SAM" id="MobiDB-lite"/>
    </source>
</evidence>
<evidence type="ECO:0000305" key="3"/>